<dbReference type="EMBL" id="AJ719529">
    <property type="protein sequence ID" value="CAG31188.1"/>
    <property type="molecule type" value="mRNA"/>
</dbReference>
<dbReference type="RefSeq" id="NP_001025724.1">
    <property type="nucleotide sequence ID" value="NM_001030553.1"/>
</dbReference>
<dbReference type="SMR" id="Q5ZM55"/>
<dbReference type="FunCoup" id="Q5ZM55">
    <property type="interactions" value="3623"/>
</dbReference>
<dbReference type="STRING" id="9031.ENSGALP00000042401"/>
<dbReference type="PaxDb" id="9031-ENSGALP00000042401"/>
<dbReference type="GeneID" id="415559"/>
<dbReference type="KEGG" id="gga:415559"/>
<dbReference type="CTD" id="10116"/>
<dbReference type="VEuPathDB" id="HostDB:geneid_415559"/>
<dbReference type="eggNOG" id="KOG0508">
    <property type="taxonomic scope" value="Eukaryota"/>
</dbReference>
<dbReference type="InParanoid" id="Q5ZM55"/>
<dbReference type="OrthoDB" id="4429489at2759"/>
<dbReference type="PhylomeDB" id="Q5ZM55"/>
<dbReference type="UniPathway" id="UPA00143"/>
<dbReference type="PRO" id="PR:Q5ZM55"/>
<dbReference type="Proteomes" id="UP000000539">
    <property type="component" value="Unassembled WGS sequence"/>
</dbReference>
<dbReference type="GO" id="GO:0031462">
    <property type="term" value="C:Cul2-RING ubiquitin ligase complex"/>
    <property type="evidence" value="ECO:0000250"/>
    <property type="project" value="UniProtKB"/>
</dbReference>
<dbReference type="GO" id="GO:0005737">
    <property type="term" value="C:cytoplasm"/>
    <property type="evidence" value="ECO:0000250"/>
    <property type="project" value="UniProtKB"/>
</dbReference>
<dbReference type="GO" id="GO:0005634">
    <property type="term" value="C:nucleus"/>
    <property type="evidence" value="ECO:0000250"/>
    <property type="project" value="UniProtKB"/>
</dbReference>
<dbReference type="GO" id="GO:0000151">
    <property type="term" value="C:ubiquitin ligase complex"/>
    <property type="evidence" value="ECO:0000318"/>
    <property type="project" value="GO_Central"/>
</dbReference>
<dbReference type="GO" id="GO:1990756">
    <property type="term" value="F:ubiquitin-like ligase-substrate adaptor activity"/>
    <property type="evidence" value="ECO:0000250"/>
    <property type="project" value="UniProtKB"/>
</dbReference>
<dbReference type="GO" id="GO:0006915">
    <property type="term" value="P:apoptotic process"/>
    <property type="evidence" value="ECO:0007669"/>
    <property type="project" value="UniProtKB-KW"/>
</dbReference>
<dbReference type="GO" id="GO:0043161">
    <property type="term" value="P:proteasome-mediated ubiquitin-dependent protein catabolic process"/>
    <property type="evidence" value="ECO:0000250"/>
    <property type="project" value="UniProtKB"/>
</dbReference>
<dbReference type="GO" id="GO:0016567">
    <property type="term" value="P:protein ubiquitination"/>
    <property type="evidence" value="ECO:0007669"/>
    <property type="project" value="UniProtKB-UniPathway"/>
</dbReference>
<dbReference type="GO" id="GO:2000001">
    <property type="term" value="P:regulation of DNA damage checkpoint"/>
    <property type="evidence" value="ECO:0000250"/>
    <property type="project" value="UniProtKB"/>
</dbReference>
<dbReference type="GO" id="GO:0140627">
    <property type="term" value="P:ubiquitin-dependent protein catabolic process via the C-end degron rule pathway"/>
    <property type="evidence" value="ECO:0000250"/>
    <property type="project" value="UniProtKB"/>
</dbReference>
<dbReference type="FunFam" id="1.25.40.20:FF:000205">
    <property type="entry name" value="Fem-1 homolog B"/>
    <property type="match status" value="1"/>
</dbReference>
<dbReference type="FunFam" id="1.25.40.20:FF:000117">
    <property type="entry name" value="Protein fem-1 homolog B"/>
    <property type="match status" value="1"/>
</dbReference>
<dbReference type="Gene3D" id="1.25.40.20">
    <property type="entry name" value="Ankyrin repeat-containing domain"/>
    <property type="match status" value="3"/>
</dbReference>
<dbReference type="InterPro" id="IPR002110">
    <property type="entry name" value="Ankyrin_rpt"/>
</dbReference>
<dbReference type="InterPro" id="IPR036770">
    <property type="entry name" value="Ankyrin_rpt-contain_sf"/>
</dbReference>
<dbReference type="PANTHER" id="PTHR24173">
    <property type="entry name" value="ANKYRIN REPEAT CONTAINING"/>
    <property type="match status" value="1"/>
</dbReference>
<dbReference type="PANTHER" id="PTHR24173:SF83">
    <property type="entry name" value="SOCS BOX DOMAIN-CONTAINING PROTEIN"/>
    <property type="match status" value="1"/>
</dbReference>
<dbReference type="Pfam" id="PF00023">
    <property type="entry name" value="Ank"/>
    <property type="match status" value="1"/>
</dbReference>
<dbReference type="Pfam" id="PF12796">
    <property type="entry name" value="Ank_2"/>
    <property type="match status" value="2"/>
</dbReference>
<dbReference type="PRINTS" id="PR01415">
    <property type="entry name" value="ANKYRIN"/>
</dbReference>
<dbReference type="SMART" id="SM00248">
    <property type="entry name" value="ANK"/>
    <property type="match status" value="8"/>
</dbReference>
<dbReference type="SUPFAM" id="SSF48403">
    <property type="entry name" value="Ankyrin repeat"/>
    <property type="match status" value="2"/>
</dbReference>
<dbReference type="PROSITE" id="PS50297">
    <property type="entry name" value="ANK_REP_REGION"/>
    <property type="match status" value="2"/>
</dbReference>
<dbReference type="PROSITE" id="PS50088">
    <property type="entry name" value="ANK_REPEAT"/>
    <property type="match status" value="6"/>
</dbReference>
<protein>
    <recommendedName>
        <fullName evidence="3">Protein fem-1 homolog B</fullName>
        <shortName evidence="1">FEM1b</shortName>
    </recommendedName>
    <alternativeName>
        <fullName>FEM1-beta</fullName>
    </alternativeName>
</protein>
<sequence>MEGLAGYVYKAASEGRVLTLAALLLNRSESDIKYLLGYVSQHGGQRSTPLIIAARNGHTKVVRLLLEHYRVQTQQTGTVRFDGFVIDGATALWCAAGAGHFEVVKLLVSHGANVNHTTVTNSTPLRAACFDGRLDIVKYLVENNANISIANKYDNTCLMIAAYKGHTDVVRYLLEQHADPNAKAHCGATALHFAAEAGHLEIVRELVKWKAAMMVNGHGMTPLKVAAESCKADVVELLLAHAGCNRRSRIEALELLGASFANDRENYDIMKTYHYLYLAMLERYRDSENIIEKEVLPPIEAYGNRTECRTPQELESIRQDRDALHMEGLIVRERILGSDNIDVSHPIIYRGAVYADNMEFEQCIKLWLHALHLRQKGNRNTHKDLLRFAQVFSQMIHLNEPVKAKDIESVLRCSVLEIEQGMSRIKATQDDDIHTAVDNYECNIFTFLYLVCISTKTQCSEEDQSRINKQIYNLIHLDPRTRDGSTLLHHAVNSSTPVDDFHTNDVCSFPNALVTKLLLDCGADVNAVDNEGNSPLHLIVQYHRPISDFLTLHSIIISLVEAGAHTDMTNKQKKTPLDKSTTGVSEILLKTQMKLSLKCLAARAVRIYNISYQNQIPRTLEEFVKFH</sequence>
<evidence type="ECO:0000250" key="1">
    <source>
        <dbReference type="UniProtKB" id="Q9UK73"/>
    </source>
</evidence>
<evidence type="ECO:0000303" key="2">
    <source>
    </source>
</evidence>
<evidence type="ECO:0000305" key="3"/>
<comment type="function">
    <text evidence="1">Substrate-recognition component of a Cul2-RING (CRL2) E3 ubiquitin-protein ligase complex of the DesCEND (destruction via C-end degrons) pathway, which recognizes a C-degron located at the extreme C terminus of target proteins, leading to their ubiquitination and degradation. The C-degron recognized by the DesCEND pathway is usually a motif of less than ten residues and can be present in full-length proteins, truncated proteins or proteolytically cleaved forms. The CRL2(FEM1B) complex specifically recognizes proteins ending with -Gly-Leu-Asp-Arg, leading to their ubiquitination and degradation.</text>
</comment>
<comment type="pathway">
    <text evidence="1">Protein modification; protein ubiquitination.</text>
</comment>
<comment type="subunit">
    <text evidence="1">Component of a CRL2 E3 ubiquitin-protein ligase complex, also named ECS (Elongin BC-CUL2/5-SOCS-box protein) complex.</text>
</comment>
<comment type="subcellular location">
    <subcellularLocation>
        <location evidence="1">Cytoplasm</location>
    </subcellularLocation>
    <subcellularLocation>
        <location evidence="1">Nucleus</location>
    </subcellularLocation>
</comment>
<comment type="similarity">
    <text evidence="3">Belongs to the fem-1 family.</text>
</comment>
<gene>
    <name evidence="1" type="primary">FEM1B</name>
    <name evidence="2" type="ORF">RCJMB04_3b14</name>
</gene>
<accession>Q5ZM55</accession>
<name>FEM1B_CHICK</name>
<proteinExistence type="evidence at transcript level"/>
<organism>
    <name type="scientific">Gallus gallus</name>
    <name type="common">Chicken</name>
    <dbReference type="NCBI Taxonomy" id="9031"/>
    <lineage>
        <taxon>Eukaryota</taxon>
        <taxon>Metazoa</taxon>
        <taxon>Chordata</taxon>
        <taxon>Craniata</taxon>
        <taxon>Vertebrata</taxon>
        <taxon>Euteleostomi</taxon>
        <taxon>Archelosauria</taxon>
        <taxon>Archosauria</taxon>
        <taxon>Dinosauria</taxon>
        <taxon>Saurischia</taxon>
        <taxon>Theropoda</taxon>
        <taxon>Coelurosauria</taxon>
        <taxon>Aves</taxon>
        <taxon>Neognathae</taxon>
        <taxon>Galloanserae</taxon>
        <taxon>Galliformes</taxon>
        <taxon>Phasianidae</taxon>
        <taxon>Phasianinae</taxon>
        <taxon>Gallus</taxon>
    </lineage>
</organism>
<keyword id="KW-0040">ANK repeat</keyword>
<keyword id="KW-0053">Apoptosis</keyword>
<keyword id="KW-0963">Cytoplasm</keyword>
<keyword id="KW-0539">Nucleus</keyword>
<keyword id="KW-1185">Reference proteome</keyword>
<keyword id="KW-0677">Repeat</keyword>
<keyword id="KW-0802">TPR repeat</keyword>
<keyword id="KW-0833">Ubl conjugation pathway</keyword>
<reference key="1">
    <citation type="journal article" date="2005" name="Genome Biol.">
        <title>Full-length cDNAs from chicken bursal lymphocytes to facilitate gene function analysis.</title>
        <authorList>
            <person name="Caldwell R.B."/>
            <person name="Kierzek A.M."/>
            <person name="Arakawa H."/>
            <person name="Bezzubov Y."/>
            <person name="Zaim J."/>
            <person name="Fiedler P."/>
            <person name="Kutter S."/>
            <person name="Blagodatski A."/>
            <person name="Kostovska D."/>
            <person name="Koter M."/>
            <person name="Plachy J."/>
            <person name="Carninci P."/>
            <person name="Hayashizaki Y."/>
            <person name="Buerstedde J.-M."/>
        </authorList>
    </citation>
    <scope>NUCLEOTIDE SEQUENCE [LARGE SCALE MRNA]</scope>
    <source>
        <strain>CB</strain>
        <tissue>Bursa of Fabricius</tissue>
    </source>
</reference>
<feature type="chain" id="PRO_0000324533" description="Protein fem-1 homolog B">
    <location>
        <begin position="1"/>
        <end position="627"/>
    </location>
</feature>
<feature type="repeat" description="ANK 1">
    <location>
        <begin position="45"/>
        <end position="74"/>
    </location>
</feature>
<feature type="repeat" description="ANK 2">
    <location>
        <begin position="87"/>
        <end position="116"/>
    </location>
</feature>
<feature type="repeat" description="ANK 3">
    <location>
        <begin position="120"/>
        <end position="149"/>
    </location>
</feature>
<feature type="repeat" description="ANK 4">
    <location>
        <begin position="153"/>
        <end position="182"/>
    </location>
</feature>
<feature type="repeat" description="ANK 5">
    <location>
        <begin position="186"/>
        <end position="215"/>
    </location>
</feature>
<feature type="repeat" description="ANK 6">
    <location>
        <begin position="218"/>
        <end position="248"/>
    </location>
</feature>
<feature type="repeat" description="TPR">
    <location>
        <begin position="344"/>
        <end position="377"/>
    </location>
</feature>
<feature type="repeat" description="ANK 7">
    <location>
        <begin position="483"/>
        <end position="527"/>
    </location>
</feature>
<feature type="repeat" description="ANK 8">
    <location>
        <begin position="531"/>
        <end position="568"/>
    </location>
</feature>